<evidence type="ECO:0000255" key="1">
    <source>
        <dbReference type="HAMAP-Rule" id="MF_01308"/>
    </source>
</evidence>
<evidence type="ECO:0000269" key="2">
    <source>
    </source>
</evidence>
<evidence type="ECO:0000305" key="3">
    <source>
    </source>
</evidence>
<evidence type="ECO:0000312" key="4">
    <source>
        <dbReference type="Araport" id="ATCG00530"/>
    </source>
</evidence>
<evidence type="ECO:0000312" key="5">
    <source>
        <dbReference type="EMBL" id="BAA84397.1"/>
    </source>
</evidence>
<proteinExistence type="inferred from homology"/>
<accession>P56783</accession>
<feature type="chain" id="PRO_0000216633" description="Potassium/proton antiporter CemA">
    <location>
        <begin position="1"/>
        <end position="229"/>
    </location>
</feature>
<feature type="transmembrane region" description="Helical" evidence="1">
    <location>
        <begin position="6"/>
        <end position="26"/>
    </location>
</feature>
<feature type="transmembrane region" description="Helical" evidence="1">
    <location>
        <begin position="107"/>
        <end position="127"/>
    </location>
</feature>
<feature type="transmembrane region" description="Helical" evidence="1">
    <location>
        <begin position="189"/>
        <end position="209"/>
    </location>
</feature>
<gene>
    <name evidence="1 5" type="primary">cemA</name>
    <name evidence="5" type="synonym">ycf10</name>
    <name evidence="4" type="ordered locus">AtCg00530</name>
</gene>
<keyword id="KW-0050">Antiport</keyword>
<keyword id="KW-0150">Chloroplast</keyword>
<keyword id="KW-0375">Hydrogen ion transport</keyword>
<keyword id="KW-0406">Ion transport</keyword>
<keyword id="KW-0472">Membrane</keyword>
<keyword id="KW-0934">Plastid</keyword>
<keyword id="KW-1001">Plastid inner membrane</keyword>
<keyword id="KW-0630">Potassium</keyword>
<keyword id="KW-0633">Potassium transport</keyword>
<keyword id="KW-1185">Reference proteome</keyword>
<keyword id="KW-0812">Transmembrane</keyword>
<keyword id="KW-1133">Transmembrane helix</keyword>
<keyword id="KW-0813">Transport</keyword>
<protein>
    <recommendedName>
        <fullName evidence="1 3">Potassium/proton antiporter CemA</fullName>
    </recommendedName>
    <alternativeName>
        <fullName evidence="1">Chloroplast envelope membrane protein A</fullName>
        <shortName evidence="1">CemA</shortName>
    </alternativeName>
</protein>
<reference key="1">
    <citation type="journal article" date="1999" name="DNA Res.">
        <title>Complete structure of the chloroplast genome of Arabidopsis thaliana.</title>
        <authorList>
            <person name="Sato S."/>
            <person name="Nakamura Y."/>
            <person name="Kaneko T."/>
            <person name="Asamizu E."/>
            <person name="Tabata S."/>
        </authorList>
    </citation>
    <scope>NUCLEOTIDE SEQUENCE [LARGE SCALE GENOMIC DNA]</scope>
    <source>
        <strain>cv. Columbia</strain>
    </source>
</reference>
<reference key="2">
    <citation type="journal article" date="2019" name="Plant Cell Physiol.">
        <title>DAY-LENGTH-DEPENDENT DELAYED-GREENING1, the Arabidopsis homolog of the cyanobacterial H+-extrusion protein, is essential for chloroplast pH regulation and optimization of non-photochemical quenching.</title>
        <authorList>
            <person name="Harada K."/>
            <person name="Arizono T."/>
            <person name="Sato R."/>
            <person name="Trinh M.D.L."/>
            <person name="Hashimoto A."/>
            <person name="Kono M."/>
            <person name="Tsujii M."/>
            <person name="Uozumi N."/>
            <person name="Takaichi S."/>
            <person name="Masuda S."/>
        </authorList>
    </citation>
    <scope>FUNCTION</scope>
    <scope>TRANSPORTER ACTIVITY</scope>
    <source>
        <strain>cv. Columbia</strain>
    </source>
</reference>
<organism>
    <name type="scientific">Arabidopsis thaliana</name>
    <name type="common">Mouse-ear cress</name>
    <dbReference type="NCBI Taxonomy" id="3702"/>
    <lineage>
        <taxon>Eukaryota</taxon>
        <taxon>Viridiplantae</taxon>
        <taxon>Streptophyta</taxon>
        <taxon>Embryophyta</taxon>
        <taxon>Tracheophyta</taxon>
        <taxon>Spermatophyta</taxon>
        <taxon>Magnoliopsida</taxon>
        <taxon>eudicotyledons</taxon>
        <taxon>Gunneridae</taxon>
        <taxon>Pentapetalae</taxon>
        <taxon>rosids</taxon>
        <taxon>malvids</taxon>
        <taxon>Brassicales</taxon>
        <taxon>Brassicaceae</taxon>
        <taxon>Camelineae</taxon>
        <taxon>Arabidopsis</taxon>
    </lineage>
</organism>
<dbReference type="EMBL" id="AP000423">
    <property type="protein sequence ID" value="BAA84397.1"/>
    <property type="molecule type" value="Genomic_DNA"/>
</dbReference>
<dbReference type="RefSeq" id="NP_051071.1">
    <property type="nucleotide sequence ID" value="NC_000932.1"/>
</dbReference>
<dbReference type="FunCoup" id="P56783">
    <property type="interactions" value="41"/>
</dbReference>
<dbReference type="STRING" id="3702.P56783"/>
<dbReference type="PaxDb" id="3702-ATCG00530.1"/>
<dbReference type="ProteomicsDB" id="220384"/>
<dbReference type="EnsemblPlants" id="ATCG00530.1">
    <property type="protein sequence ID" value="ATCG00530.1"/>
    <property type="gene ID" value="ATCG00530"/>
</dbReference>
<dbReference type="GeneID" id="844747"/>
<dbReference type="Gramene" id="ATCG00530.1">
    <property type="protein sequence ID" value="ATCG00530.1"/>
    <property type="gene ID" value="ATCG00530"/>
</dbReference>
<dbReference type="KEGG" id="ath:ArthCp034"/>
<dbReference type="Araport" id="ATCG00530"/>
<dbReference type="TAIR" id="ATCG00530">
    <property type="gene designation" value="YCF10"/>
</dbReference>
<dbReference type="eggNOG" id="ENOG502QV51">
    <property type="taxonomic scope" value="Eukaryota"/>
</dbReference>
<dbReference type="HOGENOM" id="CLU_105224_0_0_1"/>
<dbReference type="InParanoid" id="P56783"/>
<dbReference type="OMA" id="VVIYHAI"/>
<dbReference type="PRO" id="PR:P56783"/>
<dbReference type="Proteomes" id="UP000006548">
    <property type="component" value="Chloroplast Pltd"/>
</dbReference>
<dbReference type="ExpressionAtlas" id="P56783">
    <property type="expression patterns" value="baseline and differential"/>
</dbReference>
<dbReference type="GO" id="GO:0009706">
    <property type="term" value="C:chloroplast inner membrane"/>
    <property type="evidence" value="ECO:0007669"/>
    <property type="project" value="UniProtKB-SubCell"/>
</dbReference>
<dbReference type="GO" id="GO:0015386">
    <property type="term" value="F:potassium:proton antiporter activity"/>
    <property type="evidence" value="ECO:0000314"/>
    <property type="project" value="UniProtKB"/>
</dbReference>
<dbReference type="GO" id="GO:0071805">
    <property type="term" value="P:potassium ion transmembrane transport"/>
    <property type="evidence" value="ECO:0000314"/>
    <property type="project" value="UniProtKB"/>
</dbReference>
<dbReference type="GO" id="GO:0051453">
    <property type="term" value="P:regulation of intracellular pH"/>
    <property type="evidence" value="ECO:0000314"/>
    <property type="project" value="UniProtKB"/>
</dbReference>
<dbReference type="HAMAP" id="MF_01308">
    <property type="entry name" value="CemA_PxcA"/>
    <property type="match status" value="1"/>
</dbReference>
<dbReference type="InterPro" id="IPR004282">
    <property type="entry name" value="CemA"/>
</dbReference>
<dbReference type="PANTHER" id="PTHR33650:SF2">
    <property type="entry name" value="CHLOROPLAST ENVELOPE MEMBRANE PROTEIN"/>
    <property type="match status" value="1"/>
</dbReference>
<dbReference type="PANTHER" id="PTHR33650">
    <property type="entry name" value="CHLOROPLAST ENVELOPE MEMBRANE PROTEIN-RELATED"/>
    <property type="match status" value="1"/>
</dbReference>
<dbReference type="Pfam" id="PF03040">
    <property type="entry name" value="CemA"/>
    <property type="match status" value="1"/>
</dbReference>
<comment type="function">
    <text evidence="1 2">Contributes to K(+)/H(+) antiport activity by supporting proton efflux to control proton extrusion and homeostasis in chloroplasts in a light-dependent manner to modulate photosynthesis (PubMed:31665522). Prevents excessive induction of non-photochemical quenching (NPQ) under continuous-light conditions (By similarity). Indirectly promotes efficient inorganic carbon uptake into chloroplasts (By similarity).</text>
</comment>
<comment type="catalytic activity">
    <reaction evidence="1 2">
        <text>K(+)(in) + H(+)(out) = K(+)(out) + H(+)(in)</text>
        <dbReference type="Rhea" id="RHEA:29467"/>
        <dbReference type="ChEBI" id="CHEBI:15378"/>
        <dbReference type="ChEBI" id="CHEBI:29103"/>
    </reaction>
</comment>
<comment type="subcellular location">
    <subcellularLocation>
        <location evidence="1">Plastid</location>
        <location evidence="1">Chloroplast inner membrane</location>
        <topology evidence="1">Multi-pass membrane protein</topology>
    </subcellularLocation>
</comment>
<comment type="similarity">
    <text evidence="1">Belongs to the CemA family.</text>
</comment>
<name>CEMA_ARATH</name>
<sequence length="229" mass="27405">MAKKKAFIPFFYFLSIVFLPWLISLCCNKSLKTWITNWWNTRQCETFLNDIQEKSFLEKFIQLEELFQLDEMIKEYPETNLQQFRLGIHKETIQFIKIHNEYNIHTILHFSTNLISFVILSGYSFWGKEKLFILNSWVQEFLYNLSDTIKAFSILLLTDLCIGFHSPHGWELMIGYIYKDFGFAHYEQILSGLVSTFPVILDTIFKYWIFRYLNRVSPSLVVIYHAIND</sequence>
<geneLocation type="chloroplast"/>